<sequence>MANHSSSSSDQGTKKKGFKFRQLPEHAYQGKAKRIKQDLILKAKTKKHFYKNVRPEEYIKKGSGERKRKFSKKSHLQELYERSEEKRRIQQEKEDAKVQKRLEIEKKQKDREQTRNMLSKKTKRGQPIMRNQINHLLAKVKQTS</sequence>
<evidence type="ECO:0000250" key="1"/>
<evidence type="ECO:0000255" key="2"/>
<evidence type="ECO:0000256" key="3">
    <source>
        <dbReference type="SAM" id="MobiDB-lite"/>
    </source>
</evidence>
<evidence type="ECO:0000269" key="4">
    <source>
    </source>
</evidence>
<evidence type="ECO:0000305" key="5"/>
<organism>
    <name type="scientific">Schizosaccharomyces pombe (strain 972 / ATCC 24843)</name>
    <name type="common">Fission yeast</name>
    <dbReference type="NCBI Taxonomy" id="284812"/>
    <lineage>
        <taxon>Eukaryota</taxon>
        <taxon>Fungi</taxon>
        <taxon>Dikarya</taxon>
        <taxon>Ascomycota</taxon>
        <taxon>Taphrinomycotina</taxon>
        <taxon>Schizosaccharomycetes</taxon>
        <taxon>Schizosaccharomycetales</taxon>
        <taxon>Schizosaccharomycetaceae</taxon>
        <taxon>Schizosaccharomyces</taxon>
    </lineage>
</organism>
<protein>
    <recommendedName>
        <fullName>rRNA-processing protein fyv7</fullName>
    </recommendedName>
</protein>
<gene>
    <name type="primary">fyv7</name>
    <name type="ORF">SPAC8C9.07</name>
</gene>
<proteinExistence type="inferred from homology"/>
<keyword id="KW-0175">Coiled coil</keyword>
<keyword id="KW-0539">Nucleus</keyword>
<keyword id="KW-1185">Reference proteome</keyword>
<keyword id="KW-0690">Ribosome biogenesis</keyword>
<keyword id="KW-0698">rRNA processing</keyword>
<feature type="chain" id="PRO_0000339136" description="rRNA-processing protein fyv7">
    <location>
        <begin position="1"/>
        <end position="144"/>
    </location>
</feature>
<feature type="region of interest" description="Disordered" evidence="3">
    <location>
        <begin position="1"/>
        <end position="33"/>
    </location>
</feature>
<feature type="region of interest" description="Disordered" evidence="3">
    <location>
        <begin position="62"/>
        <end position="132"/>
    </location>
</feature>
<feature type="coiled-coil region" evidence="2">
    <location>
        <begin position="72"/>
        <end position="124"/>
    </location>
</feature>
<feature type="compositionally biased region" description="Polar residues" evidence="3">
    <location>
        <begin position="1"/>
        <end position="11"/>
    </location>
</feature>
<feature type="compositionally biased region" description="Basic and acidic residues" evidence="3">
    <location>
        <begin position="75"/>
        <end position="114"/>
    </location>
</feature>
<comment type="function">
    <text evidence="1">Involved in the processing of the 20S pre-rRNA.</text>
</comment>
<comment type="subcellular location">
    <subcellularLocation>
        <location evidence="4">Nucleus</location>
        <location evidence="4">Nucleolus</location>
    </subcellularLocation>
</comment>
<comment type="similarity">
    <text evidence="5">Belongs to the FYV7 family.</text>
</comment>
<name>FYV7_SCHPO</name>
<dbReference type="EMBL" id="CU329670">
    <property type="protein sequence ID" value="CAB16295.1"/>
    <property type="molecule type" value="Genomic_DNA"/>
</dbReference>
<dbReference type="PIR" id="T39144">
    <property type="entry name" value="T39144"/>
</dbReference>
<dbReference type="RefSeq" id="NP_594278.1">
    <property type="nucleotide sequence ID" value="NM_001019701.2"/>
</dbReference>
<dbReference type="BioGRID" id="279458">
    <property type="interactions" value="1"/>
</dbReference>
<dbReference type="STRING" id="284812.O14276"/>
<dbReference type="PaxDb" id="4896-SPAC8C9.07.1"/>
<dbReference type="EnsemblFungi" id="SPAC8C9.07.1">
    <property type="protein sequence ID" value="SPAC8C9.07.1:pep"/>
    <property type="gene ID" value="SPAC8C9.07"/>
</dbReference>
<dbReference type="GeneID" id="2543022"/>
<dbReference type="KEGG" id="spo:2543022"/>
<dbReference type="PomBase" id="SPAC8C9.07">
    <property type="gene designation" value="fyv7"/>
</dbReference>
<dbReference type="VEuPathDB" id="FungiDB:SPAC8C9.07"/>
<dbReference type="eggNOG" id="KOG4851">
    <property type="taxonomic scope" value="Eukaryota"/>
</dbReference>
<dbReference type="HOGENOM" id="CLU_1807327_0_0_1"/>
<dbReference type="InParanoid" id="O14276"/>
<dbReference type="OMA" id="MGPKIDD"/>
<dbReference type="PhylomeDB" id="O14276"/>
<dbReference type="PRO" id="PR:O14276"/>
<dbReference type="Proteomes" id="UP000002485">
    <property type="component" value="Chromosome I"/>
</dbReference>
<dbReference type="GO" id="GO:0005730">
    <property type="term" value="C:nucleolus"/>
    <property type="evidence" value="ECO:0007005"/>
    <property type="project" value="PomBase"/>
</dbReference>
<dbReference type="GO" id="GO:0030490">
    <property type="term" value="P:maturation of SSU-rRNA"/>
    <property type="evidence" value="ECO:0000266"/>
    <property type="project" value="PomBase"/>
</dbReference>
<dbReference type="InterPro" id="IPR013730">
    <property type="entry name" value="Fyv7/TAP26"/>
</dbReference>
<dbReference type="InterPro" id="IPR017265">
    <property type="entry name" value="Fyv7_fungi"/>
</dbReference>
<dbReference type="PANTHER" id="PTHR15657">
    <property type="entry name" value="THYROID TRANSCRIPTION FACTOR 1-ASSOCIATED PROTEIN 26"/>
    <property type="match status" value="1"/>
</dbReference>
<dbReference type="PANTHER" id="PTHR15657:SF1">
    <property type="entry name" value="THYROID TRANSCRIPTION FACTOR 1-ASSOCIATED PROTEIN 26"/>
    <property type="match status" value="1"/>
</dbReference>
<dbReference type="Pfam" id="PF08524">
    <property type="entry name" value="rRNA_processing"/>
    <property type="match status" value="1"/>
</dbReference>
<dbReference type="PIRSF" id="PIRSF037708">
    <property type="entry name" value="rRNA_proc_FYV7"/>
    <property type="match status" value="1"/>
</dbReference>
<dbReference type="PRINTS" id="PR01854">
    <property type="entry name" value="BR22PROTEIN"/>
</dbReference>
<accession>O14276</accession>
<reference key="1">
    <citation type="journal article" date="2002" name="Nature">
        <title>The genome sequence of Schizosaccharomyces pombe.</title>
        <authorList>
            <person name="Wood V."/>
            <person name="Gwilliam R."/>
            <person name="Rajandream M.A."/>
            <person name="Lyne M.H."/>
            <person name="Lyne R."/>
            <person name="Stewart A."/>
            <person name="Sgouros J.G."/>
            <person name="Peat N."/>
            <person name="Hayles J."/>
            <person name="Baker S.G."/>
            <person name="Basham D."/>
            <person name="Bowman S."/>
            <person name="Brooks K."/>
            <person name="Brown D."/>
            <person name="Brown S."/>
            <person name="Chillingworth T."/>
            <person name="Churcher C.M."/>
            <person name="Collins M."/>
            <person name="Connor R."/>
            <person name="Cronin A."/>
            <person name="Davis P."/>
            <person name="Feltwell T."/>
            <person name="Fraser A."/>
            <person name="Gentles S."/>
            <person name="Goble A."/>
            <person name="Hamlin N."/>
            <person name="Harris D.E."/>
            <person name="Hidalgo J."/>
            <person name="Hodgson G."/>
            <person name="Holroyd S."/>
            <person name="Hornsby T."/>
            <person name="Howarth S."/>
            <person name="Huckle E.J."/>
            <person name="Hunt S."/>
            <person name="Jagels K."/>
            <person name="James K.D."/>
            <person name="Jones L."/>
            <person name="Jones M."/>
            <person name="Leather S."/>
            <person name="McDonald S."/>
            <person name="McLean J."/>
            <person name="Mooney P."/>
            <person name="Moule S."/>
            <person name="Mungall K.L."/>
            <person name="Murphy L.D."/>
            <person name="Niblett D."/>
            <person name="Odell C."/>
            <person name="Oliver K."/>
            <person name="O'Neil S."/>
            <person name="Pearson D."/>
            <person name="Quail M.A."/>
            <person name="Rabbinowitsch E."/>
            <person name="Rutherford K.M."/>
            <person name="Rutter S."/>
            <person name="Saunders D."/>
            <person name="Seeger K."/>
            <person name="Sharp S."/>
            <person name="Skelton J."/>
            <person name="Simmonds M.N."/>
            <person name="Squares R."/>
            <person name="Squares S."/>
            <person name="Stevens K."/>
            <person name="Taylor K."/>
            <person name="Taylor R.G."/>
            <person name="Tivey A."/>
            <person name="Walsh S.V."/>
            <person name="Warren T."/>
            <person name="Whitehead S."/>
            <person name="Woodward J.R."/>
            <person name="Volckaert G."/>
            <person name="Aert R."/>
            <person name="Robben J."/>
            <person name="Grymonprez B."/>
            <person name="Weltjens I."/>
            <person name="Vanstreels E."/>
            <person name="Rieger M."/>
            <person name="Schaefer M."/>
            <person name="Mueller-Auer S."/>
            <person name="Gabel C."/>
            <person name="Fuchs M."/>
            <person name="Duesterhoeft A."/>
            <person name="Fritzc C."/>
            <person name="Holzer E."/>
            <person name="Moestl D."/>
            <person name="Hilbert H."/>
            <person name="Borzym K."/>
            <person name="Langer I."/>
            <person name="Beck A."/>
            <person name="Lehrach H."/>
            <person name="Reinhardt R."/>
            <person name="Pohl T.M."/>
            <person name="Eger P."/>
            <person name="Zimmermann W."/>
            <person name="Wedler H."/>
            <person name="Wambutt R."/>
            <person name="Purnelle B."/>
            <person name="Goffeau A."/>
            <person name="Cadieu E."/>
            <person name="Dreano S."/>
            <person name="Gloux S."/>
            <person name="Lelaure V."/>
            <person name="Mottier S."/>
            <person name="Galibert F."/>
            <person name="Aves S.J."/>
            <person name="Xiang Z."/>
            <person name="Hunt C."/>
            <person name="Moore K."/>
            <person name="Hurst S.M."/>
            <person name="Lucas M."/>
            <person name="Rochet M."/>
            <person name="Gaillardin C."/>
            <person name="Tallada V.A."/>
            <person name="Garzon A."/>
            <person name="Thode G."/>
            <person name="Daga R.R."/>
            <person name="Cruzado L."/>
            <person name="Jimenez J."/>
            <person name="Sanchez M."/>
            <person name="del Rey F."/>
            <person name="Benito J."/>
            <person name="Dominguez A."/>
            <person name="Revuelta J.L."/>
            <person name="Moreno S."/>
            <person name="Armstrong J."/>
            <person name="Forsburg S.L."/>
            <person name="Cerutti L."/>
            <person name="Lowe T."/>
            <person name="McCombie W.R."/>
            <person name="Paulsen I."/>
            <person name="Potashkin J."/>
            <person name="Shpakovski G.V."/>
            <person name="Ussery D."/>
            <person name="Barrell B.G."/>
            <person name="Nurse P."/>
        </authorList>
    </citation>
    <scope>NUCLEOTIDE SEQUENCE [LARGE SCALE GENOMIC DNA]</scope>
    <source>
        <strain>972 / ATCC 24843</strain>
    </source>
</reference>
<reference key="2">
    <citation type="journal article" date="2006" name="Nat. Biotechnol.">
        <title>ORFeome cloning and global analysis of protein localization in the fission yeast Schizosaccharomyces pombe.</title>
        <authorList>
            <person name="Matsuyama A."/>
            <person name="Arai R."/>
            <person name="Yashiroda Y."/>
            <person name="Shirai A."/>
            <person name="Kamata A."/>
            <person name="Sekido S."/>
            <person name="Kobayashi Y."/>
            <person name="Hashimoto A."/>
            <person name="Hamamoto M."/>
            <person name="Hiraoka Y."/>
            <person name="Horinouchi S."/>
            <person name="Yoshida M."/>
        </authorList>
    </citation>
    <scope>SUBCELLULAR LOCATION [LARGE SCALE ANALYSIS]</scope>
</reference>